<gene>
    <name type="primary">COX5A</name>
</gene>
<dbReference type="EMBL" id="DQ987249">
    <property type="protein sequence ID" value="ABK92296.1"/>
    <property type="molecule type" value="mRNA"/>
</dbReference>
<dbReference type="SMR" id="B0VYY2"/>
<dbReference type="UniPathway" id="UPA00705"/>
<dbReference type="GO" id="GO:0005743">
    <property type="term" value="C:mitochondrial inner membrane"/>
    <property type="evidence" value="ECO:0007669"/>
    <property type="project" value="UniProtKB-SubCell"/>
</dbReference>
<dbReference type="GO" id="GO:0045277">
    <property type="term" value="C:respiratory chain complex IV"/>
    <property type="evidence" value="ECO:0007669"/>
    <property type="project" value="InterPro"/>
</dbReference>
<dbReference type="GO" id="GO:0046872">
    <property type="term" value="F:metal ion binding"/>
    <property type="evidence" value="ECO:0007669"/>
    <property type="project" value="UniProtKB-KW"/>
</dbReference>
<dbReference type="GO" id="GO:0006123">
    <property type="term" value="P:mitochondrial electron transport, cytochrome c to oxygen"/>
    <property type="evidence" value="ECO:0007669"/>
    <property type="project" value="InterPro"/>
</dbReference>
<dbReference type="CDD" id="cd00923">
    <property type="entry name" value="Cyt_c_Oxidase_Va"/>
    <property type="match status" value="1"/>
</dbReference>
<dbReference type="FunFam" id="1.25.40.40:FF:000002">
    <property type="entry name" value="cytochrome c oxidase subunit 5A, mitochondrial"/>
    <property type="match status" value="1"/>
</dbReference>
<dbReference type="Gene3D" id="1.25.40.40">
    <property type="entry name" value="Cytochrome c oxidase, subunit Va/VI"/>
    <property type="match status" value="1"/>
</dbReference>
<dbReference type="InterPro" id="IPR003204">
    <property type="entry name" value="Cyt_c_oxidase_su5A/6"/>
</dbReference>
<dbReference type="InterPro" id="IPR036545">
    <property type="entry name" value="Cyt_c_oxidase_su5A/6_sf"/>
</dbReference>
<dbReference type="PANTHER" id="PTHR14200">
    <property type="entry name" value="CYTOCHROME C OXIDASE POLYPEPTIDE"/>
    <property type="match status" value="1"/>
</dbReference>
<dbReference type="PANTHER" id="PTHR14200:SF16">
    <property type="entry name" value="CYTOCHROME C OXIDASE SUBUNIT 5A, MITOCHONDRIAL"/>
    <property type="match status" value="1"/>
</dbReference>
<dbReference type="Pfam" id="PF02284">
    <property type="entry name" value="COX5A"/>
    <property type="match status" value="1"/>
</dbReference>
<dbReference type="SUPFAM" id="SSF48479">
    <property type="entry name" value="Cytochrome c oxidase subunit E"/>
    <property type="match status" value="1"/>
</dbReference>
<comment type="function">
    <text evidence="2">Component of the cytochrome c oxidase, the last enzyme in the mitochondrial electron transport chain which drives oxidative phosphorylation. The respiratory chain contains 3 multisubunit complexes succinate dehydrogenase (complex II, CII), ubiquinol-cytochrome c oxidoreductase (cytochrome b-c1 complex, complex III, CIII) and cytochrome c oxidase (complex IV, CIV), that cooperate to transfer electrons derived from NADH and succinate to molecular oxygen, creating an electrochemical gradient over the inner membrane that drives transmembrane transport and the ATP synthase. Cytochrome c oxidase is the component of the respiratory chain that catalyzes the reduction of oxygen to water. Electrons originating from reduced cytochrome c in the intermembrane space (IMS) are transferred via the dinuclear copper A center (CU(A)) of subunit 2 and heme A of subunit 1 to the active site in subunit 1, a binuclear center (BNC) formed by heme A3 and copper B (CU(B)). The BNC reduces molecular oxygen to 2 water molecules using 4 electrons from cytochrome c in the IMS and 4 protons from the mitochondrial matrix.</text>
</comment>
<comment type="pathway">
    <text evidence="2">Energy metabolism; oxidative phosphorylation.</text>
</comment>
<comment type="subunit">
    <text evidence="1 4">Component of the cytochrome c oxidase (complex IV, CIV), a multisubunit enzyme composed of 14 subunits. The complex is composed of a catalytic core of 3 subunits MT-CO1, MT-CO2 and MT-CO3, encoded in the mitochondrial DNA, and 11 supernumerary subunits COX4I, COX5A, COX5B, COX6A, COX6B, COX6C, COX7A, COX7B, COX7C, COX8 and NDUFA4, which are encoded in the nuclear genome. The complex exists as a monomer or a dimer and forms supercomplexes (SCs) in the inner mitochondrial membrane with NADH-ubiquinone oxidoreductase (complex I, CI) and ubiquinol-cytochrome c oxidoreductase (cytochrome b-c1 complex, complex III, CIII), resulting in different assemblies (supercomplex SCI(1)III(2)IV(1) and megacomplex MCI(2)III(2)IV(2)) (By similarity). Interacts with AFG1L (By similarity). Interacts with RAB5IF (By similarity).</text>
</comment>
<comment type="subcellular location">
    <subcellularLocation>
        <location evidence="1">Mitochondrion inner membrane</location>
        <topology evidence="1">Peripheral membrane protein</topology>
        <orientation evidence="1">Matrix side</orientation>
    </subcellularLocation>
</comment>
<comment type="PTM">
    <text evidence="4">In response to mitochondrial stress, the precursor protein is ubiquitinated by the SIFI complex in the cytoplasm before mitochondrial import, leading to its degradation. Within the SIFI complex, UBR4 initiates ubiquitin chain that are further elongated or branched by KCMF1.</text>
</comment>
<comment type="similarity">
    <text evidence="5">Belongs to the cytochrome c oxidase subunit 5A family.</text>
</comment>
<protein>
    <recommendedName>
        <fullName>Cytochrome c oxidase subunit 5A, mitochondrial</fullName>
    </recommendedName>
    <alternativeName>
        <fullName>Cytochrome c oxidase polypeptide Va</fullName>
    </alternativeName>
</protein>
<name>COX5A_NYCCO</name>
<reference key="1">
    <citation type="journal article" date="2008" name="BMC Evol. Biol.">
        <title>Molecular evolution of the cytochrome c oxidase subunit 5A gene in primates.</title>
        <authorList>
            <person name="Uddin M."/>
            <person name="Opazo J.C."/>
            <person name="Wildman D.E."/>
            <person name="Sherwood C.C."/>
            <person name="Hof P.R."/>
            <person name="Goodman M."/>
            <person name="Grossman L.I."/>
        </authorList>
    </citation>
    <scope>NUCLEOTIDE SEQUENCE [MRNA]</scope>
</reference>
<sequence length="150" mass="16605">MLGTALRRCAVAAASRAGPRGLQHPAPVPGPTAAIQSIRCYSHGSHETDEEFDARWVTYFNKPDIDAWELRKGMNTLVGYDLVPEPKIIDAALRACRRLNDFASAVRILEVVKDKAGPHKEIYPYVIQELRPTLNELGISTPEELGLDKV</sequence>
<organism>
    <name type="scientific">Nycticebus coucang</name>
    <name type="common">Slow loris</name>
    <dbReference type="NCBI Taxonomy" id="9470"/>
    <lineage>
        <taxon>Eukaryota</taxon>
        <taxon>Metazoa</taxon>
        <taxon>Chordata</taxon>
        <taxon>Craniata</taxon>
        <taxon>Vertebrata</taxon>
        <taxon>Euteleostomi</taxon>
        <taxon>Mammalia</taxon>
        <taxon>Eutheria</taxon>
        <taxon>Euarchontoglires</taxon>
        <taxon>Primates</taxon>
        <taxon>Strepsirrhini</taxon>
        <taxon>Lorisiformes</taxon>
        <taxon>Lorisidae</taxon>
        <taxon>Nycticebus</taxon>
    </lineage>
</organism>
<accession>B0VYY2</accession>
<feature type="transit peptide" description="Mitochondrion" evidence="1">
    <location>
        <begin position="1"/>
        <end position="41"/>
    </location>
</feature>
<feature type="chain" id="PRO_0000355985" description="Cytochrome c oxidase subunit 5A, mitochondrial">
    <location>
        <begin position="42"/>
        <end position="150"/>
    </location>
</feature>
<feature type="short sequence motif" description="SIFI-degron" evidence="4">
    <location>
        <begin position="2"/>
        <end position="17"/>
    </location>
</feature>
<feature type="modified residue" description="N6-acetyllysine" evidence="3">
    <location>
        <position position="87"/>
    </location>
</feature>
<feature type="modified residue" description="N6-acetyllysine" evidence="3">
    <location>
        <position position="113"/>
    </location>
</feature>
<feature type="modified residue" description="Phosphothreonine" evidence="4">
    <location>
        <position position="141"/>
    </location>
</feature>
<evidence type="ECO:0000250" key="1">
    <source>
        <dbReference type="UniProtKB" id="P00426"/>
    </source>
</evidence>
<evidence type="ECO:0000250" key="2">
    <source>
        <dbReference type="UniProtKB" id="P00427"/>
    </source>
</evidence>
<evidence type="ECO:0000250" key="3">
    <source>
        <dbReference type="UniProtKB" id="P12787"/>
    </source>
</evidence>
<evidence type="ECO:0000250" key="4">
    <source>
        <dbReference type="UniProtKB" id="P20674"/>
    </source>
</evidence>
<evidence type="ECO:0000305" key="5"/>
<keyword id="KW-0007">Acetylation</keyword>
<keyword id="KW-0349">Heme</keyword>
<keyword id="KW-0408">Iron</keyword>
<keyword id="KW-0472">Membrane</keyword>
<keyword id="KW-0479">Metal-binding</keyword>
<keyword id="KW-0496">Mitochondrion</keyword>
<keyword id="KW-0999">Mitochondrion inner membrane</keyword>
<keyword id="KW-0597">Phosphoprotein</keyword>
<keyword id="KW-0809">Transit peptide</keyword>
<keyword id="KW-0832">Ubl conjugation</keyword>
<proteinExistence type="evidence at transcript level"/>